<reference key="1">
    <citation type="journal article" date="2012" name="Gene">
        <title>A novel big protein TPRBK possessing 25 units of TPR motif is essential for the progress of mitosis and cytokinesis.</title>
        <authorList>
            <person name="Izumiyama T."/>
            <person name="Minoshima S."/>
            <person name="Yoshida T."/>
            <person name="Shimizu N."/>
        </authorList>
    </citation>
    <scope>NUCLEOTIDE SEQUENCE [MRNA]</scope>
    <scope>FUNCTION</scope>
    <scope>INTERACTION WITH AURKB</scope>
    <scope>TISSUE SPECIFICITY</scope>
</reference>
<reference key="2">
    <citation type="journal article" date="1999" name="Nature">
        <title>The DNA sequence of human chromosome 22.</title>
        <authorList>
            <person name="Dunham I."/>
            <person name="Hunt A.R."/>
            <person name="Collins J.E."/>
            <person name="Bruskiewich R."/>
            <person name="Beare D.M."/>
            <person name="Clamp M."/>
            <person name="Smink L.J."/>
            <person name="Ainscough R."/>
            <person name="Almeida J.P."/>
            <person name="Babbage A.K."/>
            <person name="Bagguley C."/>
            <person name="Bailey J."/>
            <person name="Barlow K.F."/>
            <person name="Bates K.N."/>
            <person name="Beasley O.P."/>
            <person name="Bird C.P."/>
            <person name="Blakey S.E."/>
            <person name="Bridgeman A.M."/>
            <person name="Buck D."/>
            <person name="Burgess J."/>
            <person name="Burrill W.D."/>
            <person name="Burton J."/>
            <person name="Carder C."/>
            <person name="Carter N.P."/>
            <person name="Chen Y."/>
            <person name="Clark G."/>
            <person name="Clegg S.M."/>
            <person name="Cobley V.E."/>
            <person name="Cole C.G."/>
            <person name="Collier R.E."/>
            <person name="Connor R."/>
            <person name="Conroy D."/>
            <person name="Corby N.R."/>
            <person name="Coville G.J."/>
            <person name="Cox A.V."/>
            <person name="Davis J."/>
            <person name="Dawson E."/>
            <person name="Dhami P.D."/>
            <person name="Dockree C."/>
            <person name="Dodsworth S.J."/>
            <person name="Durbin R.M."/>
            <person name="Ellington A.G."/>
            <person name="Evans K.L."/>
            <person name="Fey J.M."/>
            <person name="Fleming K."/>
            <person name="French L."/>
            <person name="Garner A.A."/>
            <person name="Gilbert J.G.R."/>
            <person name="Goward M.E."/>
            <person name="Grafham D.V."/>
            <person name="Griffiths M.N.D."/>
            <person name="Hall C."/>
            <person name="Hall R.E."/>
            <person name="Hall-Tamlyn G."/>
            <person name="Heathcott R.W."/>
            <person name="Ho S."/>
            <person name="Holmes S."/>
            <person name="Hunt S.E."/>
            <person name="Jones M.C."/>
            <person name="Kershaw J."/>
            <person name="Kimberley A.M."/>
            <person name="King A."/>
            <person name="Laird G.K."/>
            <person name="Langford C.F."/>
            <person name="Leversha M.A."/>
            <person name="Lloyd C."/>
            <person name="Lloyd D.M."/>
            <person name="Martyn I.D."/>
            <person name="Mashreghi-Mohammadi M."/>
            <person name="Matthews L.H."/>
            <person name="Mccann O.T."/>
            <person name="Mcclay J."/>
            <person name="Mclaren S."/>
            <person name="McMurray A.A."/>
            <person name="Milne S.A."/>
            <person name="Mortimore B.J."/>
            <person name="Odell C.N."/>
            <person name="Pavitt R."/>
            <person name="Pearce A.V."/>
            <person name="Pearson D."/>
            <person name="Phillimore B.J.C.T."/>
            <person name="Phillips S.H."/>
            <person name="Plumb R.W."/>
            <person name="Ramsay H."/>
            <person name="Ramsey Y."/>
            <person name="Rogers L."/>
            <person name="Ross M.T."/>
            <person name="Scott C.E."/>
            <person name="Sehra H.K."/>
            <person name="Skuce C.D."/>
            <person name="Smalley S."/>
            <person name="Smith M.L."/>
            <person name="Soderlund C."/>
            <person name="Spragon L."/>
            <person name="Steward C.A."/>
            <person name="Sulston J.E."/>
            <person name="Swann R.M."/>
            <person name="Vaudin M."/>
            <person name="Wall M."/>
            <person name="Wallis J.M."/>
            <person name="Whiteley M.N."/>
            <person name="Willey D.L."/>
            <person name="Williams L."/>
            <person name="Williams S.A."/>
            <person name="Williamson H."/>
            <person name="Wilmer T.E."/>
            <person name="Wilming L."/>
            <person name="Wright C.L."/>
            <person name="Hubbard T."/>
            <person name="Bentley D.R."/>
            <person name="Beck S."/>
            <person name="Rogers J."/>
            <person name="Shimizu N."/>
            <person name="Minoshima S."/>
            <person name="Kawasaki K."/>
            <person name="Sasaki T."/>
            <person name="Asakawa S."/>
            <person name="Kudoh J."/>
            <person name="Shintani A."/>
            <person name="Shibuya K."/>
            <person name="Yoshizaki Y."/>
            <person name="Aoki N."/>
            <person name="Mitsuyama S."/>
            <person name="Roe B.A."/>
            <person name="Chen F."/>
            <person name="Chu L."/>
            <person name="Crabtree J."/>
            <person name="Deschamps S."/>
            <person name="Do A."/>
            <person name="Do T."/>
            <person name="Dorman A."/>
            <person name="Fang F."/>
            <person name="Fu Y."/>
            <person name="Hu P."/>
            <person name="Hua A."/>
            <person name="Kenton S."/>
            <person name="Lai H."/>
            <person name="Lao H.I."/>
            <person name="Lewis J."/>
            <person name="Lewis S."/>
            <person name="Lin S.-P."/>
            <person name="Loh P."/>
            <person name="Malaj E."/>
            <person name="Nguyen T."/>
            <person name="Pan H."/>
            <person name="Phan S."/>
            <person name="Qi S."/>
            <person name="Qian Y."/>
            <person name="Ray L."/>
            <person name="Ren Q."/>
            <person name="Shaull S."/>
            <person name="Sloan D."/>
            <person name="Song L."/>
            <person name="Wang Q."/>
            <person name="Wang Y."/>
            <person name="Wang Z."/>
            <person name="White J."/>
            <person name="Willingham D."/>
            <person name="Wu H."/>
            <person name="Yao Z."/>
            <person name="Zhan M."/>
            <person name="Zhang G."/>
            <person name="Chissoe S."/>
            <person name="Murray J."/>
            <person name="Miller N."/>
            <person name="Minx P."/>
            <person name="Fulton R."/>
            <person name="Johnson D."/>
            <person name="Bemis G."/>
            <person name="Bentley D."/>
            <person name="Bradshaw H."/>
            <person name="Bourne S."/>
            <person name="Cordes M."/>
            <person name="Du Z."/>
            <person name="Fulton L."/>
            <person name="Goela D."/>
            <person name="Graves T."/>
            <person name="Hawkins J."/>
            <person name="Hinds K."/>
            <person name="Kemp K."/>
            <person name="Latreille P."/>
            <person name="Layman D."/>
            <person name="Ozersky P."/>
            <person name="Rohlfing T."/>
            <person name="Scheet P."/>
            <person name="Walker C."/>
            <person name="Wamsley A."/>
            <person name="Wohldmann P."/>
            <person name="Pepin K."/>
            <person name="Nelson J."/>
            <person name="Korf I."/>
            <person name="Bedell J.A."/>
            <person name="Hillier L.W."/>
            <person name="Mardis E."/>
            <person name="Waterston R."/>
            <person name="Wilson R."/>
            <person name="Emanuel B.S."/>
            <person name="Shaikh T."/>
            <person name="Kurahashi H."/>
            <person name="Saitta S."/>
            <person name="Budarf M.L."/>
            <person name="McDermid H.E."/>
            <person name="Johnson A."/>
            <person name="Wong A.C.C."/>
            <person name="Morrow B.E."/>
            <person name="Edelmann L."/>
            <person name="Kim U.J."/>
            <person name="Shizuya H."/>
            <person name="Simon M.I."/>
            <person name="Dumanski J.P."/>
            <person name="Peyrard M."/>
            <person name="Kedra D."/>
            <person name="Seroussi E."/>
            <person name="Fransson I."/>
            <person name="Tapia I."/>
            <person name="Bruder C.E."/>
            <person name="O'Brien K.P."/>
            <person name="Wilkinson P."/>
            <person name="Bodenteich A."/>
            <person name="Hartman K."/>
            <person name="Hu X."/>
            <person name="Khan A.S."/>
            <person name="Lane L."/>
            <person name="Tilahun Y."/>
            <person name="Wright H."/>
        </authorList>
    </citation>
    <scope>NUCLEOTIDE SEQUENCE [LARGE SCALE GENOMIC DNA]</scope>
</reference>
<reference key="3">
    <citation type="submission" date="2007-04" db="EMBL/GenBank/DDBJ databases">
        <title>KNU hair EST project.</title>
        <authorList>
            <person name="Kim M.K."/>
            <person name="Kim Y.H."/>
            <person name="Suh J.M."/>
            <person name="Lee H.M."/>
            <person name="Hwang S.Y."/>
            <person name="Sohn M.Y."/>
            <person name="Im S.U."/>
            <person name="Chung E.J."/>
            <person name="Cha S.Y."/>
            <person name="Park M.K."/>
            <person name="Kim J.O."/>
            <person name="Kim J.A."/>
            <person name="Yang J.O."/>
            <person name="Sung Y.K."/>
            <person name="Kim J.C."/>
        </authorList>
    </citation>
    <scope>NUCLEOTIDE SEQUENCE [LARGE SCALE MRNA] OF 1-97</scope>
</reference>
<reference key="4">
    <citation type="submission" date="2002-09" db="EMBL/GenBank/DDBJ databases">
        <title>Re-evaluating human gene annotation: a second generation analysis of chromosome 22.</title>
        <authorList>
            <person name="Collins J.E."/>
            <person name="Goward M.E."/>
            <person name="Cole C.G."/>
            <person name="Smink L.J."/>
            <person name="Huckle E.J."/>
            <person name="Knowles S."/>
            <person name="Bye J.M."/>
            <person name="Beare D.M."/>
            <person name="Dunham I."/>
        </authorList>
    </citation>
    <scope>NUCLEOTIDE SEQUENCE [LARGE SCALE MRNA] OF 159-292</scope>
</reference>
<reference key="5">
    <citation type="journal article" date="1999" name="DNA Res.">
        <title>Prediction of the coding sequences of unidentified human genes. XIV. The complete sequences of 100 new cDNA clones from brain which code for large proteins in vitro.</title>
        <authorList>
            <person name="Kikuno R."/>
            <person name="Nagase T."/>
            <person name="Ishikawa K."/>
            <person name="Hirosawa M."/>
            <person name="Miyajima N."/>
            <person name="Tanaka A."/>
            <person name="Kotani H."/>
            <person name="Nomura N."/>
            <person name="Ohara O."/>
        </authorList>
    </citation>
    <scope>NUCLEOTIDE SEQUENCE [LARGE SCALE MRNA] OF 356-2481</scope>
    <source>
        <tissue>Brain</tissue>
    </source>
</reference>
<reference key="6">
    <citation type="journal article" date="2002" name="DNA Res.">
        <title>Construction of expression-ready cDNA clones for KIAA genes: manual curation of 330 KIAA cDNA clones.</title>
        <authorList>
            <person name="Nakajima D."/>
            <person name="Okazaki N."/>
            <person name="Yamakawa H."/>
            <person name="Kikuno R."/>
            <person name="Ohara O."/>
            <person name="Nagase T."/>
        </authorList>
    </citation>
    <scope>SEQUENCE REVISION</scope>
</reference>
<reference key="7">
    <citation type="journal article" date="2004" name="Genome Res.">
        <title>The status, quality, and expansion of the NIH full-length cDNA project: the Mammalian Gene Collection (MGC).</title>
        <authorList>
            <consortium name="The MGC Project Team"/>
        </authorList>
    </citation>
    <scope>NUCLEOTIDE SEQUENCE [LARGE SCALE MRNA] OF 1106-2481</scope>
    <source>
        <tissue>Brain</tissue>
    </source>
</reference>
<reference key="8">
    <citation type="journal article" date="2007" name="BMC Genomics">
        <title>The full-ORF clone resource of the German cDNA consortium.</title>
        <authorList>
            <person name="Bechtel S."/>
            <person name="Rosenfelder H."/>
            <person name="Duda A."/>
            <person name="Schmidt C.P."/>
            <person name="Ernst U."/>
            <person name="Wellenreuther R."/>
            <person name="Mehrle A."/>
            <person name="Schuster C."/>
            <person name="Bahr A."/>
            <person name="Bloecker H."/>
            <person name="Heubner D."/>
            <person name="Hoerlein A."/>
            <person name="Michel G."/>
            <person name="Wedler H."/>
            <person name="Koehrer K."/>
            <person name="Ottenwaelder B."/>
            <person name="Poustka A."/>
            <person name="Wiemann S."/>
            <person name="Schupp I."/>
        </authorList>
    </citation>
    <scope>NUCLEOTIDE SEQUENCE [LARGE SCALE MRNA] OF 1914-2481</scope>
    <source>
        <tissue>Testis</tissue>
    </source>
</reference>
<reference key="9">
    <citation type="journal article" date="2008" name="Mol. Cell">
        <title>Kinase-selective enrichment enables quantitative phosphoproteomics of the kinome across the cell cycle.</title>
        <authorList>
            <person name="Daub H."/>
            <person name="Olsen J.V."/>
            <person name="Bairlein M."/>
            <person name="Gnad F."/>
            <person name="Oppermann F.S."/>
            <person name="Korner R."/>
            <person name="Greff Z."/>
            <person name="Keri G."/>
            <person name="Stemmann O."/>
            <person name="Mann M."/>
        </authorList>
    </citation>
    <scope>PHOSPHORYLATION [LARGE SCALE ANALYSIS] AT SER-2398</scope>
    <scope>IDENTIFICATION BY MASS SPECTROMETRY [LARGE SCALE ANALYSIS]</scope>
    <source>
        <tissue>Cervix carcinoma</tissue>
    </source>
</reference>
<reference key="10">
    <citation type="journal article" date="2008" name="Proc. Natl. Acad. Sci. U.S.A.">
        <title>A quantitative atlas of mitotic phosphorylation.</title>
        <authorList>
            <person name="Dephoure N."/>
            <person name="Zhou C."/>
            <person name="Villen J."/>
            <person name="Beausoleil S.A."/>
            <person name="Bakalarski C.E."/>
            <person name="Elledge S.J."/>
            <person name="Gygi S.P."/>
        </authorList>
    </citation>
    <scope>PHOSPHORYLATION [LARGE SCALE ANALYSIS] AT SER-28; SER-2104 AND SER-2398</scope>
    <scope>IDENTIFICATION BY MASS SPECTROMETRY [LARGE SCALE ANALYSIS]</scope>
    <source>
        <tissue>Cervix carcinoma</tissue>
    </source>
</reference>
<reference key="11">
    <citation type="journal article" date="2009" name="Anal. Chem.">
        <title>Lys-N and trypsin cover complementary parts of the phosphoproteome in a refined SCX-based approach.</title>
        <authorList>
            <person name="Gauci S."/>
            <person name="Helbig A.O."/>
            <person name="Slijper M."/>
            <person name="Krijgsveld J."/>
            <person name="Heck A.J."/>
            <person name="Mohammed S."/>
        </authorList>
    </citation>
    <scope>IDENTIFICATION BY MASS SPECTROMETRY [LARGE SCALE ANALYSIS]</scope>
</reference>
<reference key="12">
    <citation type="journal article" date="2009" name="Mol. Cell. Proteomics">
        <title>Large-scale proteomics analysis of the human kinome.</title>
        <authorList>
            <person name="Oppermann F.S."/>
            <person name="Gnad F."/>
            <person name="Olsen J.V."/>
            <person name="Hornberger R."/>
            <person name="Greff Z."/>
            <person name="Keri G."/>
            <person name="Mann M."/>
            <person name="Daub H."/>
        </authorList>
    </citation>
    <scope>PHOSPHORYLATION [LARGE SCALE ANALYSIS] AT SER-28</scope>
    <scope>IDENTIFICATION BY MASS SPECTROMETRY [LARGE SCALE ANALYSIS]</scope>
</reference>
<reference key="13">
    <citation type="journal article" date="2010" name="Sci. Signal.">
        <title>Quantitative phosphoproteomics reveals widespread full phosphorylation site occupancy during mitosis.</title>
        <authorList>
            <person name="Olsen J.V."/>
            <person name="Vermeulen M."/>
            <person name="Santamaria A."/>
            <person name="Kumar C."/>
            <person name="Miller M.L."/>
            <person name="Jensen L.J."/>
            <person name="Gnad F."/>
            <person name="Cox J."/>
            <person name="Jensen T.S."/>
            <person name="Nigg E.A."/>
            <person name="Brunak S."/>
            <person name="Mann M."/>
        </authorList>
    </citation>
    <scope>PHOSPHORYLATION [LARGE SCALE ANALYSIS] AT SER-2393 AND SER-2398</scope>
    <scope>IDENTIFICATION BY MASS SPECTROMETRY [LARGE SCALE ANALYSIS]</scope>
    <source>
        <tissue>Cervix carcinoma</tissue>
    </source>
</reference>
<reference key="14">
    <citation type="journal article" date="2011" name="BMC Syst. Biol.">
        <title>Initial characterization of the human central proteome.</title>
        <authorList>
            <person name="Burkard T.R."/>
            <person name="Planyavsky M."/>
            <person name="Kaupe I."/>
            <person name="Breitwieser F.P."/>
            <person name="Buerckstuemmer T."/>
            <person name="Bennett K.L."/>
            <person name="Superti-Furga G."/>
            <person name="Colinge J."/>
        </authorList>
    </citation>
    <scope>IDENTIFICATION BY MASS SPECTROMETRY [LARGE SCALE ANALYSIS]</scope>
</reference>
<reference key="15">
    <citation type="journal article" date="2012" name="Proc. Natl. Acad. Sci. U.S.A.">
        <title>N-terminal acetylome analyses and functional insights of the N-terminal acetyltransferase NatB.</title>
        <authorList>
            <person name="Van Damme P."/>
            <person name="Lasa M."/>
            <person name="Polevoda B."/>
            <person name="Gazquez C."/>
            <person name="Elosegui-Artola A."/>
            <person name="Kim D.S."/>
            <person name="De Juan-Pardo E."/>
            <person name="Demeyer K."/>
            <person name="Hole K."/>
            <person name="Larrea E."/>
            <person name="Timmerman E."/>
            <person name="Prieto J."/>
            <person name="Arnesen T."/>
            <person name="Sherman F."/>
            <person name="Gevaert K."/>
            <person name="Aldabe R."/>
        </authorList>
    </citation>
    <scope>ACETYLATION [LARGE SCALE ANALYSIS] AT MET-1</scope>
    <scope>IDENTIFICATION BY MASS SPECTROMETRY [LARGE SCALE ANALYSIS]</scope>
</reference>
<reference key="16">
    <citation type="journal article" date="2013" name="J. Proteome Res.">
        <title>Toward a comprehensive characterization of a human cancer cell phosphoproteome.</title>
        <authorList>
            <person name="Zhou H."/>
            <person name="Di Palma S."/>
            <person name="Preisinger C."/>
            <person name="Peng M."/>
            <person name="Polat A.N."/>
            <person name="Heck A.J."/>
            <person name="Mohammed S."/>
        </authorList>
    </citation>
    <scope>PHOSPHORYLATION [LARGE SCALE ANALYSIS] AT SER-2251 AND SER-2398</scope>
    <scope>IDENTIFICATION BY MASS SPECTROMETRY [LARGE SCALE ANALYSIS]</scope>
    <source>
        <tissue>Cervix carcinoma</tissue>
        <tissue>Erythroleukemia</tissue>
    </source>
</reference>
<reference key="17">
    <citation type="journal article" date="2014" name="J. Proteomics">
        <title>An enzyme assisted RP-RPLC approach for in-depth analysis of human liver phosphoproteome.</title>
        <authorList>
            <person name="Bian Y."/>
            <person name="Song C."/>
            <person name="Cheng K."/>
            <person name="Dong M."/>
            <person name="Wang F."/>
            <person name="Huang J."/>
            <person name="Sun D."/>
            <person name="Wang L."/>
            <person name="Ye M."/>
            <person name="Zou H."/>
        </authorList>
    </citation>
    <scope>PHOSPHORYLATION [LARGE SCALE ANALYSIS] AT SER-28 AND SER-2224</scope>
    <scope>IDENTIFICATION BY MASS SPECTROMETRY [LARGE SCALE ANALYSIS]</scope>
    <source>
        <tissue>Liver</tissue>
    </source>
</reference>
<sequence length="2481" mass="270884">MEQSPPPAPEPTQGPTPARSRRRREPESPPASAPIPLFGADTIGQRSPDGPVLSKAEFVEKVRQSNQACHDGDFHTAIVLYNEALAVDPQNCILYSNRSAAYMKIQQYDKALDDAIKARLLNPKWPKAYFRQGVALQYLGRHADALAAFASGLAQDPKSLQLLVGMVEAAMKSPMRDSLEPTYQQLQKMKLDKSPFVVVSVVGQELLTAGHHGASVVVLEAALKIGTCSLKLRGSVFSALSSAYWSLGNTEKSTGYMQQDLDVAKTLGDQTGECRAHGNLGSAFFSKGNYREALTNHRHQLVLAMKLKDREAASSALSSLGHVYTAIGDYPNALASHKQCVLLAKQSKDELSEARELGNMGAVYIAMGDFENAVQCHEQHLKIAKDLGNKREEARAYSNLGSAYHYRRNFDKAMSYHNYVLELAQELMEKAIEMRAYAGLGHAARCMQDLERAKQYHEQQLGIAEDLKDRAAEGRASSNLGIIHQMKGDYDTALKLHKTHLCIAQELSDYAAQGRAYGNMGNAYNALGMYDQAVKYHRQELQISMEVNDRASQASTHGNLAVAYQALGAHDRALQHYQNHLNIARELRDIQSEARALSNLGNFHCSRGEYVQAAPYYEQYLRLAPDLQDMEGEGKVCHNLGYAHYCLGNYQEAVKYYEQDLALAKDLHDKLSQAKAYCNLGLAFKALLNFSKAEECQKYLLSLAQSLNNSQAKFRALGNLGDIFICKKDINGAIKFYEQQLGLAHQVKDRRLEASAYAALGTAYRMIQKYDKALGYHTQELEVYQELSDLPGECRAHGHLAAVYMALGKYTMAFKCYEEQLDLGQKLKDPSLEAQVYGNMGITKMNMNVMEEAIGYFEQQLAMLQQLSGNESVLDRGRAYGNLGDCYEALGDYEEAIKYYEQYLSVAQSLNRMQDQAKAYRGLGNGHRAMGSLQQALVCFEKRLVVAHELGEAFNKAQAYGELGSLHSQLGNYEQAISCLERQLNIARDMKDRALESDAACGLGGVYQQMGEYDTALQYHQLDLQIAEETNNPTCQGRAYGNLGLTYESLGTFERAVVYQEQHLSIAAQMNDLAAKTVSYSSLGRTHHALQNYSQAVMYLQEGLRLAEQLGRREDEAKIRHGLGLSLWASGNLEEAQHQLYRASALFETIRHEAQLSTDYKLSLFDLQTSSYQALQRVLVSLGHHDEALAVAERGRTRAFADLLVERQTGQQDSDPYSPVTIDQILEMVNGQRGLVLYYSLAAGYLYSWLLAPGAGIVKFHEHYLGENTVENSSDFQASSSVTLPTATGSALEQHIASVREALGVESHYSRACASSETESEAGDIMDQQFEEMNNKLNSVTDPTGFLRMVRRNNLFNRSCQSMTSLFSNTVSPTQDGTSSLPRRQSSFAKPPLRALYDLLIAPMEGGLMHSSGPVGRHRQLILVLEGELYLIPFALLKGSSSNEYLYERFGLLAVPSIRSLSVQSKSHLRKNPPTYSSSTSMAAVIGNPKLPSAVMDRWLWGPMPSAEEEAYMVSELLGCQPLVGSVATKERVMSALTQAECVHFATHISWKLSALVLTPSMDGNPASSKSSFGHPYTIPESLRVQDDASDGESISDCPPLQELLLTAADVLDLQLPVKLVVLGSSQESNSKVTADGVIALTRAFLAAGAQCVLVSLWPVPVAASKMFIHAFYSSLLNGLKASAALGEAMKVVQSSKAFSHPSNWAGFMLIGSDVKLNSPSSLIGQALTEILQHPERARDALRVLLHLVEKSLQRIQNGQRNAMYTSQQSVENKVGGIPGWQALLTAVGFRLDPPTSGLPAAVFFPTSDPGDRLQQCSSTLQSLLGLPNPALQALCKLITASETGEQLISRAVKNMVGMLHQVLVQLQAGEKEQDLASAPIQVSISVQLWRLPGCHEFLAALGFDLCEVGQEEVILKTGKQANRRTVHFALQSLLSLFDSTELPKRLSLDSSSSLESLASAQSVSNALPLGYQQPPFSPTGADSIASDAISVYSLSSIASSMSFVSKPEGGSEGGGPGGRQDHDRSKNAYLQRSTLPRSQLPPQTRPAGNKDEEEYEGFSIISNEPLATYQENRNTCFSPDHKQPQPGTAGGMRVSVSSKGSISTPNSPVKMTLIPSPNSPFQKVGKLASSDTGESDQSSTETDSTVKSQEESNPKLDPQELAQKILEETQSHLIAVERLQRSGGQVSKSNNPEDGVQAPSSTAVFRASETSAFSRPVLSHQKSQPSPVTVKPKPPARSSSLPKVSSGYSSPTTSEMSIKDSPSQHSGRPSPGCDSQTSQLDQPLFKLKYPSSPYSAHISKSPRNMSPSSGHQSPAGSAPSPALSYSSAGSARSSPADAPDIDKLKMAAIDEKVQAVHNLKMFWQSTPQHSTGPMKIFRGAPGTMTSKRDVLSLLNLSPRHNKKEEGVDKLELKELSLQQHDGAPPKAPPNGHWRTETTSLGSLPLPAGPPATAPARPLRLPSGNGYKFLSPGRFFPSSKC</sequence>
<organism>
    <name type="scientific">Homo sapiens</name>
    <name type="common">Human</name>
    <dbReference type="NCBI Taxonomy" id="9606"/>
    <lineage>
        <taxon>Eukaryota</taxon>
        <taxon>Metazoa</taxon>
        <taxon>Chordata</taxon>
        <taxon>Craniata</taxon>
        <taxon>Vertebrata</taxon>
        <taxon>Euteleostomi</taxon>
        <taxon>Mammalia</taxon>
        <taxon>Eutheria</taxon>
        <taxon>Euarchontoglires</taxon>
        <taxon>Primates</taxon>
        <taxon>Haplorrhini</taxon>
        <taxon>Catarrhini</taxon>
        <taxon>Hominidae</taxon>
        <taxon>Homo</taxon>
    </lineage>
</organism>
<keyword id="KW-0007">Acetylation</keyword>
<keyword id="KW-0131">Cell cycle</keyword>
<keyword id="KW-0132">Cell division</keyword>
<keyword id="KW-0963">Cytoplasm</keyword>
<keyword id="KW-0206">Cytoskeleton</keyword>
<keyword id="KW-0498">Mitosis</keyword>
<keyword id="KW-0597">Phosphoprotein</keyword>
<keyword id="KW-1267">Proteomics identification</keyword>
<keyword id="KW-1185">Reference proteome</keyword>
<keyword id="KW-0677">Repeat</keyword>
<keyword id="KW-0802">TPR repeat</keyword>
<accession>Q96AY4</accession>
<accession>K7ZRV2</accession>
<accession>O95928</accession>
<accession>O95929</accession>
<accession>Q5W189</accession>
<accession>Q9NTE4</accession>
<accession>Q9UG31</accession>
<accession>Q9UGG5</accession>
<accession>Q9UPV8</accession>
<accession>Q9Y3S5</accession>
<dbReference type="EMBL" id="AB665284">
    <property type="protein sequence ID" value="BAM66822.1"/>
    <property type="molecule type" value="mRNA"/>
</dbReference>
<dbReference type="EMBL" id="AL008724">
    <property type="protein sequence ID" value="CAB62963.1"/>
    <property type="status" value="ALT_SEQ"/>
    <property type="molecule type" value="Genomic_DNA"/>
</dbReference>
<dbReference type="EMBL" id="AL008724">
    <property type="protein sequence ID" value="CAB62964.1"/>
    <property type="status" value="ALT_SEQ"/>
    <property type="molecule type" value="Genomic_DNA"/>
</dbReference>
<dbReference type="EMBL" id="AL121825">
    <property type="status" value="NOT_ANNOTATED_CDS"/>
    <property type="molecule type" value="Genomic_DNA"/>
</dbReference>
<dbReference type="EMBL" id="AL023281">
    <property type="status" value="NOT_ANNOTATED_CDS"/>
    <property type="molecule type" value="Genomic_DNA"/>
</dbReference>
<dbReference type="EMBL" id="AL050313">
    <property type="status" value="NOT_ANNOTATED_CDS"/>
    <property type="molecule type" value="Genomic_DNA"/>
</dbReference>
<dbReference type="EMBL" id="AL035453">
    <property type="status" value="NOT_ANNOTATED_CDS"/>
    <property type="molecule type" value="Genomic_DNA"/>
</dbReference>
<dbReference type="EMBL" id="AL035397">
    <property type="status" value="NOT_ANNOTATED_CDS"/>
    <property type="molecule type" value="Genomic_DNA"/>
</dbReference>
<dbReference type="EMBL" id="AL033538">
    <property type="status" value="NOT_ANNOTATED_CDS"/>
    <property type="molecule type" value="Genomic_DNA"/>
</dbReference>
<dbReference type="EMBL" id="ES313581">
    <property type="status" value="NOT_ANNOTATED_CDS"/>
    <property type="molecule type" value="mRNA"/>
</dbReference>
<dbReference type="EMBL" id="BU584912">
    <property type="status" value="NOT_ANNOTATED_CDS"/>
    <property type="molecule type" value="mRNA"/>
</dbReference>
<dbReference type="EMBL" id="AB028966">
    <property type="protein sequence ID" value="BAA82995.3"/>
    <property type="molecule type" value="mRNA"/>
</dbReference>
<dbReference type="EMBL" id="BC016465">
    <property type="protein sequence ID" value="AAH16465.1"/>
    <property type="status" value="ALT_INIT"/>
    <property type="molecule type" value="mRNA"/>
</dbReference>
<dbReference type="EMBL" id="AL080174">
    <property type="protein sequence ID" value="CAB45760.2"/>
    <property type="molecule type" value="mRNA"/>
</dbReference>
<dbReference type="EMBL" id="AL137328">
    <property type="protein sequence ID" value="CAB70697.1"/>
    <property type="molecule type" value="mRNA"/>
</dbReference>
<dbReference type="CCDS" id="CCDS46678.1"/>
<dbReference type="PIR" id="T12496">
    <property type="entry name" value="T12496"/>
</dbReference>
<dbReference type="RefSeq" id="NP_001138890.1">
    <property type="nucleotide sequence ID" value="NM_001145418.2"/>
</dbReference>
<dbReference type="SMR" id="Q96AY4"/>
<dbReference type="BioGRID" id="116918">
    <property type="interactions" value="114"/>
</dbReference>
<dbReference type="FunCoup" id="Q96AY4">
    <property type="interactions" value="825"/>
</dbReference>
<dbReference type="IntAct" id="Q96AY4">
    <property type="interactions" value="66"/>
</dbReference>
<dbReference type="MINT" id="Q96AY4"/>
<dbReference type="STRING" id="9606.ENSP00000381003"/>
<dbReference type="GlyCosmos" id="Q96AY4">
    <property type="glycosylation" value="2 sites, 1 glycan"/>
</dbReference>
<dbReference type="GlyGen" id="Q96AY4">
    <property type="glycosylation" value="7 sites, 1 O-linked glycan (5 sites)"/>
</dbReference>
<dbReference type="iPTMnet" id="Q96AY4"/>
<dbReference type="PhosphoSitePlus" id="Q96AY4"/>
<dbReference type="BioMuta" id="TTC28"/>
<dbReference type="DMDM" id="218512146"/>
<dbReference type="jPOST" id="Q96AY4"/>
<dbReference type="MassIVE" id="Q96AY4"/>
<dbReference type="PaxDb" id="9606-ENSP00000381003"/>
<dbReference type="PeptideAtlas" id="Q96AY4"/>
<dbReference type="ProteomicsDB" id="76021"/>
<dbReference type="Pumba" id="Q96AY4"/>
<dbReference type="Antibodypedia" id="5496">
    <property type="antibodies" value="8 antibodies from 6 providers"/>
</dbReference>
<dbReference type="DNASU" id="23331"/>
<dbReference type="Ensembl" id="ENST00000397906.7">
    <property type="protein sequence ID" value="ENSP00000381003.2"/>
    <property type="gene ID" value="ENSG00000100154.15"/>
</dbReference>
<dbReference type="GeneID" id="23331"/>
<dbReference type="KEGG" id="hsa:23331"/>
<dbReference type="MANE-Select" id="ENST00000397906.7">
    <property type="protein sequence ID" value="ENSP00000381003.2"/>
    <property type="RefSeq nucleotide sequence ID" value="NM_001145418.2"/>
    <property type="RefSeq protein sequence ID" value="NP_001138890.1"/>
</dbReference>
<dbReference type="UCSC" id="uc003adp.4">
    <property type="organism name" value="human"/>
</dbReference>
<dbReference type="AGR" id="HGNC:29179"/>
<dbReference type="CTD" id="23331"/>
<dbReference type="DisGeNET" id="23331"/>
<dbReference type="GeneCards" id="TTC28"/>
<dbReference type="HGNC" id="HGNC:29179">
    <property type="gene designation" value="TTC28"/>
</dbReference>
<dbReference type="HPA" id="ENSG00000100154">
    <property type="expression patterns" value="Low tissue specificity"/>
</dbReference>
<dbReference type="MalaCards" id="TTC28"/>
<dbReference type="MIM" id="615098">
    <property type="type" value="gene"/>
</dbReference>
<dbReference type="neXtProt" id="NX_Q96AY4"/>
<dbReference type="OpenTargets" id="ENSG00000100154"/>
<dbReference type="PharmGKB" id="PA145147752"/>
<dbReference type="VEuPathDB" id="HostDB:ENSG00000100154"/>
<dbReference type="eggNOG" id="KOG0548">
    <property type="taxonomic scope" value="Eukaryota"/>
</dbReference>
<dbReference type="eggNOG" id="KOG1130">
    <property type="taxonomic scope" value="Eukaryota"/>
</dbReference>
<dbReference type="GeneTree" id="ENSGT00940000156428"/>
<dbReference type="InParanoid" id="Q96AY4"/>
<dbReference type="OMA" id="FHAARID"/>
<dbReference type="OrthoDB" id="626167at2759"/>
<dbReference type="PAN-GO" id="Q96AY4">
    <property type="GO annotations" value="0 GO annotations based on evolutionary models"/>
</dbReference>
<dbReference type="PhylomeDB" id="Q96AY4"/>
<dbReference type="TreeFam" id="TF328344"/>
<dbReference type="PathwayCommons" id="Q96AY4"/>
<dbReference type="SignaLink" id="Q96AY4"/>
<dbReference type="BioGRID-ORCS" id="23331">
    <property type="hits" value="26 hits in 1145 CRISPR screens"/>
</dbReference>
<dbReference type="ChiTaRS" id="TTC28">
    <property type="organism name" value="human"/>
</dbReference>
<dbReference type="GenomeRNAi" id="23331"/>
<dbReference type="Pharos" id="Q96AY4">
    <property type="development level" value="Tdark"/>
</dbReference>
<dbReference type="PRO" id="PR:Q96AY4"/>
<dbReference type="Proteomes" id="UP000005640">
    <property type="component" value="Chromosome 22"/>
</dbReference>
<dbReference type="RNAct" id="Q96AY4">
    <property type="molecule type" value="protein"/>
</dbReference>
<dbReference type="Bgee" id="ENSG00000100154">
    <property type="expression patterns" value="Expressed in ganglionic eminence and 198 other cell types or tissues"/>
</dbReference>
<dbReference type="ExpressionAtlas" id="Q96AY4">
    <property type="expression patterns" value="baseline and differential"/>
</dbReference>
<dbReference type="GO" id="GO:0005813">
    <property type="term" value="C:centrosome"/>
    <property type="evidence" value="ECO:0007669"/>
    <property type="project" value="UniProtKB-SubCell"/>
</dbReference>
<dbReference type="GO" id="GO:0005737">
    <property type="term" value="C:cytoplasm"/>
    <property type="evidence" value="ECO:0007669"/>
    <property type="project" value="UniProtKB-KW"/>
</dbReference>
<dbReference type="GO" id="GO:0030496">
    <property type="term" value="C:midbody"/>
    <property type="evidence" value="ECO:0000314"/>
    <property type="project" value="UniProtKB"/>
</dbReference>
<dbReference type="GO" id="GO:0000922">
    <property type="term" value="C:spindle pole"/>
    <property type="evidence" value="ECO:0007669"/>
    <property type="project" value="UniProtKB-SubCell"/>
</dbReference>
<dbReference type="GO" id="GO:0019900">
    <property type="term" value="F:kinase binding"/>
    <property type="evidence" value="ECO:0000353"/>
    <property type="project" value="UniProtKB"/>
</dbReference>
<dbReference type="GO" id="GO:0051301">
    <property type="term" value="P:cell division"/>
    <property type="evidence" value="ECO:0007669"/>
    <property type="project" value="UniProtKB-KW"/>
</dbReference>
<dbReference type="GO" id="GO:0007346">
    <property type="term" value="P:regulation of mitotic cell cycle"/>
    <property type="evidence" value="ECO:0000315"/>
    <property type="project" value="UniProtKB"/>
</dbReference>
<dbReference type="FunFam" id="1.25.40.10:FF:000040">
    <property type="entry name" value="Tetratricopeptide repeat domain 28"/>
    <property type="match status" value="1"/>
</dbReference>
<dbReference type="FunFam" id="1.25.40.10:FF:000056">
    <property type="entry name" value="Tetratricopeptide repeat domain 28"/>
    <property type="match status" value="1"/>
</dbReference>
<dbReference type="FunFam" id="1.25.40.10:FF:000096">
    <property type="entry name" value="Tetratricopeptide repeat domain 28"/>
    <property type="match status" value="1"/>
</dbReference>
<dbReference type="FunFam" id="1.25.40.10:FF:000209">
    <property type="entry name" value="Tetratricopeptide repeat domain 28"/>
    <property type="match status" value="1"/>
</dbReference>
<dbReference type="FunFam" id="1.25.40.10:FF:000286">
    <property type="entry name" value="Tetratricopeptide repeat domain 28"/>
    <property type="match status" value="1"/>
</dbReference>
<dbReference type="FunFam" id="1.25.40.10:FF:001762">
    <property type="entry name" value="Tetratricopeptide repeat domain 28"/>
    <property type="match status" value="1"/>
</dbReference>
<dbReference type="Gene3D" id="1.25.40.10">
    <property type="entry name" value="Tetratricopeptide repeat domain"/>
    <property type="match status" value="6"/>
</dbReference>
<dbReference type="InterPro" id="IPR024983">
    <property type="entry name" value="CHAT_dom"/>
</dbReference>
<dbReference type="InterPro" id="IPR011990">
    <property type="entry name" value="TPR-like_helical_dom_sf"/>
</dbReference>
<dbReference type="InterPro" id="IPR019734">
    <property type="entry name" value="TPR_rpt"/>
</dbReference>
<dbReference type="PANTHER" id="PTHR10098">
    <property type="entry name" value="RAPSYN-RELATED"/>
    <property type="match status" value="1"/>
</dbReference>
<dbReference type="PANTHER" id="PTHR10098:SF108">
    <property type="entry name" value="TETRATRICOPEPTIDE REPEAT PROTEIN 28"/>
    <property type="match status" value="1"/>
</dbReference>
<dbReference type="Pfam" id="PF12770">
    <property type="entry name" value="CHAT"/>
    <property type="match status" value="1"/>
</dbReference>
<dbReference type="Pfam" id="PF13424">
    <property type="entry name" value="TPR_12"/>
    <property type="match status" value="10"/>
</dbReference>
<dbReference type="Pfam" id="PF13176">
    <property type="entry name" value="TPR_7"/>
    <property type="match status" value="2"/>
</dbReference>
<dbReference type="SMART" id="SM00028">
    <property type="entry name" value="TPR"/>
    <property type="match status" value="25"/>
</dbReference>
<dbReference type="SUPFAM" id="SSF48452">
    <property type="entry name" value="TPR-like"/>
    <property type="match status" value="7"/>
</dbReference>
<dbReference type="PROSITE" id="PS50005">
    <property type="entry name" value="TPR"/>
    <property type="match status" value="25"/>
</dbReference>
<dbReference type="PROSITE" id="PS50293">
    <property type="entry name" value="TPR_REGION"/>
    <property type="match status" value="1"/>
</dbReference>
<comment type="function">
    <text evidence="4">During mitosis, may be involved in the condensation of spindle midzone microtubules, leading to the formation of midbody.</text>
</comment>
<comment type="subunit">
    <text evidence="4">Interacts with AURKB.</text>
</comment>
<comment type="subcellular location">
    <subcellularLocation>
        <location evidence="1">Cytoplasm</location>
        <location evidence="1">Cytoskeleton</location>
    </subcellularLocation>
    <subcellularLocation>
        <location evidence="1">Cytoplasm</location>
        <location evidence="1">Cytoskeleton</location>
        <location evidence="1">Microtubule organizing center</location>
        <location evidence="1">Centrosome</location>
    </subcellularLocation>
    <subcellularLocation>
        <location evidence="1">Cytoplasm</location>
        <location evidence="1">Cytoskeleton</location>
        <location evidence="1">Spindle</location>
    </subcellularLocation>
    <subcellularLocation>
        <location evidence="1">Cytoplasm</location>
        <location evidence="1">Cytoskeleton</location>
        <location evidence="1">Spindle pole</location>
    </subcellularLocation>
    <subcellularLocation>
        <location evidence="1">Midbody</location>
    </subcellularLocation>
    <text evidence="1">At interphase, localizes to centrosomes. At prometaphase and metaphase, associated with spindle microtubules and spindle poles. At anaphase, accumulates in the spindle midzone. At telophase, condensed on central spindles. During cytokinesis, condensed on the midbody where it colocalizes with AURKB (By similarity).</text>
</comment>
<comment type="tissue specificity">
    <text evidence="4">Widely expressed in fetal tissues. In adult tissues, expressed in testis and ovary and, at much lower levels, in kidney and pancreas.</text>
</comment>
<comment type="sequence caution" evidence="5">
    <conflict type="erroneous initiation">
        <sequence resource="EMBL-CDS" id="AAH16465"/>
    </conflict>
    <text>Truncated N-terminus.</text>
</comment>
<comment type="sequence caution" evidence="5">
    <conflict type="erroneous gene model prediction">
        <sequence resource="EMBL-CDS" id="CAB62963"/>
    </conflict>
</comment>
<comment type="sequence caution" evidence="5">
    <conflict type="erroneous gene model prediction">
        <sequence resource="EMBL-CDS" id="CAB62964"/>
    </conflict>
</comment>
<feature type="chain" id="PRO_0000106427" description="Tetratricopeptide repeat protein 28">
    <location>
        <begin position="1"/>
        <end position="2481"/>
    </location>
</feature>
<feature type="repeat" description="TPR 1">
    <location>
        <begin position="58"/>
        <end position="91"/>
    </location>
</feature>
<feature type="repeat" description="TPR 2">
    <location>
        <begin position="93"/>
        <end position="125"/>
    </location>
</feature>
<feature type="repeat" description="TPR 3">
    <location>
        <begin position="126"/>
        <end position="159"/>
    </location>
</feature>
<feature type="repeat" description="TPR 4">
    <location>
        <begin position="196"/>
        <end position="229"/>
    </location>
</feature>
<feature type="repeat" description="TPR 5">
    <location>
        <begin position="234"/>
        <end position="267"/>
    </location>
</feature>
<feature type="repeat" description="TPR 6">
    <location>
        <begin position="274"/>
        <end position="307"/>
    </location>
</feature>
<feature type="repeat" description="TPR 7">
    <location>
        <begin position="314"/>
        <end position="347"/>
    </location>
</feature>
<feature type="repeat" description="TPR 8">
    <location>
        <begin position="354"/>
        <end position="387"/>
    </location>
</feature>
<feature type="repeat" description="TPR 9">
    <location>
        <begin position="394"/>
        <end position="427"/>
    </location>
</feature>
<feature type="repeat" description="TPR 10">
    <location>
        <begin position="434"/>
        <end position="467"/>
    </location>
</feature>
<feature type="repeat" description="TPR 11">
    <location>
        <begin position="474"/>
        <end position="507"/>
    </location>
</feature>
<feature type="repeat" description="TPR 12">
    <location>
        <begin position="514"/>
        <end position="547"/>
    </location>
</feature>
<feature type="repeat" description="TPR 13">
    <location>
        <begin position="554"/>
        <end position="587"/>
    </location>
</feature>
<feature type="repeat" description="TPR 14">
    <location>
        <begin position="594"/>
        <end position="627"/>
    </location>
</feature>
<feature type="repeat" description="TPR 15">
    <location>
        <begin position="634"/>
        <end position="667"/>
    </location>
</feature>
<feature type="repeat" description="TPR 16">
    <location>
        <begin position="674"/>
        <end position="707"/>
    </location>
</feature>
<feature type="repeat" description="TPR 17">
    <location>
        <begin position="714"/>
        <end position="747"/>
    </location>
</feature>
<feature type="repeat" description="TPR 18">
    <location>
        <begin position="754"/>
        <end position="787"/>
    </location>
</feature>
<feature type="repeat" description="TPR 19">
    <location>
        <begin position="794"/>
        <end position="827"/>
    </location>
</feature>
<feature type="repeat" description="TPR 20">
    <location>
        <begin position="834"/>
        <end position="867"/>
    </location>
</feature>
<feature type="repeat" description="TPR 21">
    <location>
        <begin position="877"/>
        <end position="910"/>
    </location>
</feature>
<feature type="repeat" description="TPR 22">
    <location>
        <begin position="917"/>
        <end position="950"/>
    </location>
</feature>
<feature type="repeat" description="TPR 23">
    <location>
        <begin position="957"/>
        <end position="990"/>
    </location>
</feature>
<feature type="repeat" description="TPR 24">
    <location>
        <begin position="997"/>
        <end position="1030"/>
    </location>
</feature>
<feature type="repeat" description="TPR 25">
    <location>
        <begin position="1037"/>
        <end position="1070"/>
    </location>
</feature>
<feature type="repeat" description="TPR 26">
    <location>
        <begin position="1077"/>
        <end position="1110"/>
    </location>
</feature>
<feature type="repeat" description="TPR 27">
    <location>
        <begin position="1117"/>
        <end position="1150"/>
    </location>
</feature>
<feature type="repeat" description="TPR 28">
    <location>
        <begin position="1169"/>
        <end position="1202"/>
    </location>
</feature>
<feature type="region of interest" description="Disordered" evidence="3">
    <location>
        <begin position="1"/>
        <end position="48"/>
    </location>
</feature>
<feature type="region of interest" description="Disordered" evidence="3">
    <location>
        <begin position="2004"/>
        <end position="2055"/>
    </location>
</feature>
<feature type="region of interest" description="Disordered" evidence="3">
    <location>
        <begin position="2075"/>
        <end position="2161"/>
    </location>
</feature>
<feature type="region of interest" description="Disordered" evidence="3">
    <location>
        <begin position="2176"/>
        <end position="2339"/>
    </location>
</feature>
<feature type="region of interest" description="Disordered" evidence="3">
    <location>
        <begin position="2420"/>
        <end position="2467"/>
    </location>
</feature>
<feature type="compositionally biased region" description="Pro residues" evidence="3">
    <location>
        <begin position="1"/>
        <end position="14"/>
    </location>
</feature>
<feature type="compositionally biased region" description="Polar residues" evidence="3">
    <location>
        <begin position="2029"/>
        <end position="2043"/>
    </location>
</feature>
<feature type="compositionally biased region" description="Polar residues" evidence="3">
    <location>
        <begin position="2096"/>
        <end position="2122"/>
    </location>
</feature>
<feature type="compositionally biased region" description="Low complexity" evidence="3">
    <location>
        <begin position="2130"/>
        <end position="2146"/>
    </location>
</feature>
<feature type="compositionally biased region" description="Basic and acidic residues" evidence="3">
    <location>
        <begin position="2149"/>
        <end position="2159"/>
    </location>
</feature>
<feature type="compositionally biased region" description="Polar residues" evidence="3">
    <location>
        <begin position="2183"/>
        <end position="2214"/>
    </location>
</feature>
<feature type="compositionally biased region" description="Polar residues" evidence="3">
    <location>
        <begin position="2238"/>
        <end position="2282"/>
    </location>
</feature>
<feature type="compositionally biased region" description="Low complexity" evidence="3">
    <location>
        <begin position="2307"/>
        <end position="2339"/>
    </location>
</feature>
<feature type="modified residue" description="N-acetylmethionine" evidence="10">
    <location>
        <position position="1"/>
    </location>
</feature>
<feature type="modified residue" description="Phosphoserine" evidence="6 8 12">
    <location>
        <position position="28"/>
    </location>
</feature>
<feature type="modified residue" description="Phosphoserine" evidence="2">
    <location>
        <position position="1590"/>
    </location>
</feature>
<feature type="modified residue" description="Phosphoserine" evidence="6">
    <location>
        <position position="2104"/>
    </location>
</feature>
<feature type="modified residue" description="Phosphoserine" evidence="12">
    <location>
        <position position="2224"/>
    </location>
</feature>
<feature type="modified residue" description="Phosphoserine" evidence="11">
    <location>
        <position position="2251"/>
    </location>
</feature>
<feature type="modified residue" description="Phosphoserine" evidence="9">
    <location>
        <position position="2393"/>
    </location>
</feature>
<feature type="modified residue" description="Phosphoserine" evidence="6 7 9 11">
    <location>
        <position position="2398"/>
    </location>
</feature>
<gene>
    <name type="primary">TTC28</name>
    <name type="synonym">KIAA1043</name>
    <name type="synonym">TPRBK</name>
</gene>
<name>TTC28_HUMAN</name>
<protein>
    <recommendedName>
        <fullName>Tetratricopeptide repeat protein 28</fullName>
        <shortName>TPR repeat protein 28</shortName>
    </recommendedName>
    <alternativeName>
        <fullName>TPR repeat-containing big gene cloned at Keio</fullName>
    </alternativeName>
</protein>
<proteinExistence type="evidence at protein level"/>
<evidence type="ECO:0000250" key="1"/>
<evidence type="ECO:0000250" key="2">
    <source>
        <dbReference type="UniProtKB" id="Q80XJ3"/>
    </source>
</evidence>
<evidence type="ECO:0000256" key="3">
    <source>
        <dbReference type="SAM" id="MobiDB-lite"/>
    </source>
</evidence>
<evidence type="ECO:0000269" key="4">
    <source>
    </source>
</evidence>
<evidence type="ECO:0000305" key="5"/>
<evidence type="ECO:0007744" key="6">
    <source>
    </source>
</evidence>
<evidence type="ECO:0007744" key="7">
    <source>
    </source>
</evidence>
<evidence type="ECO:0007744" key="8">
    <source>
    </source>
</evidence>
<evidence type="ECO:0007744" key="9">
    <source>
    </source>
</evidence>
<evidence type="ECO:0007744" key="10">
    <source>
    </source>
</evidence>
<evidence type="ECO:0007744" key="11">
    <source>
    </source>
</evidence>
<evidence type="ECO:0007744" key="12">
    <source>
    </source>
</evidence>